<dbReference type="EMBL" id="U18778">
    <property type="status" value="NOT_ANNOTATED_CDS"/>
    <property type="molecule type" value="Genomic_DNA"/>
</dbReference>
<dbReference type="EMBL" id="AF479922">
    <property type="protein sequence ID" value="AAL79235.1"/>
    <property type="molecule type" value="Genomic_DNA"/>
</dbReference>
<dbReference type="SMR" id="Q8TGR3"/>
<dbReference type="PaxDb" id="4932-YER158W-A"/>
<dbReference type="EnsemblFungi" id="YER158W-A_mRNA">
    <property type="protein sequence ID" value="YER158W-A"/>
    <property type="gene ID" value="YER158W-A"/>
</dbReference>
<dbReference type="AGR" id="SGD:S000028624"/>
<dbReference type="SGD" id="S000028624">
    <property type="gene designation" value="YER158W-A"/>
</dbReference>
<dbReference type="HOGENOM" id="CLU_2741464_0_0_1"/>
<dbReference type="GO" id="GO:0016020">
    <property type="term" value="C:membrane"/>
    <property type="evidence" value="ECO:0007669"/>
    <property type="project" value="UniProtKB-SubCell"/>
</dbReference>
<organism>
    <name type="scientific">Saccharomyces cerevisiae (strain ATCC 204508 / S288c)</name>
    <name type="common">Baker's yeast</name>
    <dbReference type="NCBI Taxonomy" id="559292"/>
    <lineage>
        <taxon>Eukaryota</taxon>
        <taxon>Fungi</taxon>
        <taxon>Dikarya</taxon>
        <taxon>Ascomycota</taxon>
        <taxon>Saccharomycotina</taxon>
        <taxon>Saccharomycetes</taxon>
        <taxon>Saccharomycetales</taxon>
        <taxon>Saccharomycetaceae</taxon>
        <taxon>Saccharomyces</taxon>
    </lineage>
</organism>
<feature type="chain" id="PRO_0000299915" description="Putative uncharacterized protein YER158W-A">
    <location>
        <begin position="1"/>
        <end position="71"/>
    </location>
</feature>
<feature type="transmembrane region" description="Helical" evidence="1">
    <location>
        <begin position="44"/>
        <end position="66"/>
    </location>
</feature>
<proteinExistence type="uncertain"/>
<evidence type="ECO:0000255" key="1"/>
<evidence type="ECO:0000305" key="2"/>
<evidence type="ECO:0000305" key="3">
    <source>
    </source>
</evidence>
<gene>
    <name type="ordered locus">YER158W-A</name>
</gene>
<reference key="1">
    <citation type="journal article" date="1997" name="Nature">
        <title>The nucleotide sequence of Saccharomyces cerevisiae chromosome V.</title>
        <authorList>
            <person name="Dietrich F.S."/>
            <person name="Mulligan J.T."/>
            <person name="Hennessy K.M."/>
            <person name="Yelton M.A."/>
            <person name="Allen E."/>
            <person name="Araujo R."/>
            <person name="Aviles E."/>
            <person name="Berno A."/>
            <person name="Brennan T."/>
            <person name="Carpenter J."/>
            <person name="Chen E."/>
            <person name="Cherry J.M."/>
            <person name="Chung E."/>
            <person name="Duncan M."/>
            <person name="Guzman E."/>
            <person name="Hartzell G."/>
            <person name="Hunicke-Smith S."/>
            <person name="Hyman R.W."/>
            <person name="Kayser A."/>
            <person name="Komp C."/>
            <person name="Lashkari D."/>
            <person name="Lew H."/>
            <person name="Lin D."/>
            <person name="Mosedale D."/>
            <person name="Nakahara K."/>
            <person name="Namath A."/>
            <person name="Norgren R."/>
            <person name="Oefner P."/>
            <person name="Oh C."/>
            <person name="Petel F.X."/>
            <person name="Roberts D."/>
            <person name="Sehl P."/>
            <person name="Schramm S."/>
            <person name="Shogren T."/>
            <person name="Smith V."/>
            <person name="Taylor P."/>
            <person name="Wei Y."/>
            <person name="Botstein D."/>
            <person name="Davis R.W."/>
        </authorList>
    </citation>
    <scope>NUCLEOTIDE SEQUENCE [LARGE SCALE GENOMIC DNA]</scope>
    <source>
        <strain>ATCC 204508 / S288c</strain>
    </source>
</reference>
<reference key="2">
    <citation type="journal article" date="2014" name="G3 (Bethesda)">
        <title>The reference genome sequence of Saccharomyces cerevisiae: Then and now.</title>
        <authorList>
            <person name="Engel S.R."/>
            <person name="Dietrich F.S."/>
            <person name="Fisk D.G."/>
            <person name="Binkley G."/>
            <person name="Balakrishnan R."/>
            <person name="Costanzo M.C."/>
            <person name="Dwight S.S."/>
            <person name="Hitz B.C."/>
            <person name="Karra K."/>
            <person name="Nash R.S."/>
            <person name="Weng S."/>
            <person name="Wong E.D."/>
            <person name="Lloyd P."/>
            <person name="Skrzypek M.S."/>
            <person name="Miyasato S.R."/>
            <person name="Simison M."/>
            <person name="Cherry J.M."/>
        </authorList>
    </citation>
    <scope>GENOME REANNOTATION</scope>
    <source>
        <strain>ATCC 204508 / S288c</strain>
    </source>
</reference>
<reference key="3">
    <citation type="journal article" date="2002" name="Nat. Biotechnol.">
        <title>An integrated approach for finding overlooked genes in yeast.</title>
        <authorList>
            <person name="Kumar A."/>
            <person name="Harrison P.M."/>
            <person name="Cheung K.-H."/>
            <person name="Lan N."/>
            <person name="Echols N."/>
            <person name="Bertone P."/>
            <person name="Miller P."/>
            <person name="Gerstein M.B."/>
            <person name="Snyder M."/>
        </authorList>
    </citation>
    <scope>NUCLEOTIDE SEQUENCE [GENOMIC DNA]</scope>
</reference>
<sequence>MWYSFYTKLHRPVLLRHSLPPVVFGLLLRIDLPLRNRIFRRLKLFFLVFRRLFSWFLVLLPSPRFFSPITL</sequence>
<accession>Q8TGR3</accession>
<protein>
    <recommendedName>
        <fullName>Putative uncharacterized protein YER158W-A</fullName>
    </recommendedName>
</protein>
<name>YE158_YEAST</name>
<keyword id="KW-0472">Membrane</keyword>
<keyword id="KW-0812">Transmembrane</keyword>
<keyword id="KW-1133">Transmembrane helix</keyword>
<comment type="subcellular location">
    <subcellularLocation>
        <location evidence="2">Membrane</location>
        <topology evidence="2">Single-pass membrane protein</topology>
    </subcellularLocation>
</comment>
<comment type="miscellaneous">
    <text evidence="2">Partially overlaps BUR6.</text>
</comment>
<comment type="caution">
    <text evidence="3">Product of a dubious gene prediction unlikely to encode a functional protein. Because of that it is not part of the S.cerevisiae S288c complete/reference proteome set.</text>
</comment>